<evidence type="ECO:0000250" key="1">
    <source>
        <dbReference type="UniProtKB" id="Q92813"/>
    </source>
</evidence>
<evidence type="ECO:0000255" key="2"/>
<evidence type="ECO:0000255" key="3">
    <source>
        <dbReference type="PROSITE-ProRule" id="PRU10107"/>
    </source>
</evidence>
<evidence type="ECO:0000269" key="4">
    <source>
    </source>
</evidence>
<evidence type="ECO:0000269" key="5">
    <source>
    </source>
</evidence>
<evidence type="ECO:0000269" key="6">
    <source>
    </source>
</evidence>
<evidence type="ECO:0000269" key="7">
    <source>
    </source>
</evidence>
<evidence type="ECO:0000305" key="8"/>
<evidence type="ECO:0000305" key="9">
    <source>
    </source>
</evidence>
<sequence>MGLLSVDLLITLQILPVFFSNCLFLALYDSVILLKHVALLLSRSKSTRGEWRRMLTSEGLRCVWNSFLLDAYKQVKLGEDAPNSSVVHVSNPEAGNNCASEKTADGAECHLLDFASAERPLVVNFGSATUPPFTRQLPAFRQLVEEFSSVADFLLVYIDEAHPSDGWAVPGDSSMSFEVKKHRNQEDRCAAAHQLLERFSLPPQCQVVADRMDNNANVAYGVAFERVCIVQRRKIAYLGGKGPFSYNLQEVRSWLEKNFSKRUILD</sequence>
<feature type="chain" id="PRO_0000154319" description="Type II iodothyronine deiodinase">
    <location>
        <begin position="1"/>
        <end position="266"/>
    </location>
</feature>
<feature type="topological domain" description="Lumenal" evidence="1">
    <location>
        <begin position="1"/>
        <end position="9"/>
    </location>
</feature>
<feature type="transmembrane region" description="Helical; Signal-anchor for type III membrane protein" evidence="2">
    <location>
        <begin position="10"/>
        <end position="34"/>
    </location>
</feature>
<feature type="topological domain" description="Cytoplasmic" evidence="1">
    <location>
        <begin position="35"/>
        <end position="266"/>
    </location>
</feature>
<feature type="active site" evidence="1">
    <location>
        <position position="130"/>
    </location>
</feature>
<feature type="non-standard amino acid" description="Selenocysteine" evidence="1">
    <location>
        <position position="130"/>
    </location>
</feature>
<feature type="non-standard amino acid" description="Selenocysteine" evidence="1">
    <location>
        <position position="263"/>
    </location>
</feature>
<feature type="sequence conflict" description="In Ref. 2; BAA25186." evidence="8" ref="2">
    <original>S</original>
    <variation>C</variation>
    <location>
        <position position="116"/>
    </location>
</feature>
<comment type="function">
    <text evidence="1 7">Plays a crucial role in the metabolism of thyroid hormones (TH) and has specific roles in TH activation and inactivation by deiodination (PubMed:9709916). Catalyzes the deiodination of L-thyroxine (T4) to 3,5,3'-triiodothyronine (T3) and 3',5'-diiodothyronine (3',5'-T2) to 3'-monoiodothyronine (3'-T1) via outer-ring deiodination (ORD) (By similarity). Catalyzes the deiodination of 3,3',5'-triiodothyronine (rT3) to 3,3'-diiodothyronine (3,3'-T2) via ORD (PubMed:8755651). Catalyzes the phenolic ring deiodinations of 3,3',5'-triiodothyronamine and 3',5'- diiodothyronamine (By similarity).</text>
</comment>
<comment type="catalytic activity">
    <reaction evidence="3">
        <text>3,3',5-triiodo-L-thyronine + iodide + A + H(+) = L-thyroxine + AH2</text>
        <dbReference type="Rhea" id="RHEA:19745"/>
        <dbReference type="ChEBI" id="CHEBI:13193"/>
        <dbReference type="ChEBI" id="CHEBI:15378"/>
        <dbReference type="ChEBI" id="CHEBI:16382"/>
        <dbReference type="ChEBI" id="CHEBI:17499"/>
        <dbReference type="ChEBI" id="CHEBI:58448"/>
        <dbReference type="ChEBI" id="CHEBI:533015"/>
        <dbReference type="EC" id="1.21.99.4"/>
    </reaction>
    <physiologicalReaction direction="right-to-left" evidence="1">
        <dbReference type="Rhea" id="RHEA:19747"/>
    </physiologicalReaction>
</comment>
<comment type="catalytic activity">
    <reaction evidence="7">
        <text>3,3'-diiodo-L-thyronine + iodide + A + H(+) = 3,3',5'-triiodo-L-thyronine + AH2</text>
        <dbReference type="Rhea" id="RHEA:82575"/>
        <dbReference type="ChEBI" id="CHEBI:13193"/>
        <dbReference type="ChEBI" id="CHEBI:15378"/>
        <dbReference type="ChEBI" id="CHEBI:16382"/>
        <dbReference type="ChEBI" id="CHEBI:17499"/>
        <dbReference type="ChEBI" id="CHEBI:57261"/>
        <dbReference type="ChEBI" id="CHEBI:176514"/>
    </reaction>
    <physiologicalReaction direction="right-to-left" evidence="9">
        <dbReference type="Rhea" id="RHEA:82577"/>
    </physiologicalReaction>
</comment>
<comment type="catalytic activity">
    <reaction evidence="1">
        <text>3'-iodo-L-thyronine + iodide + A + H(+) = 3',5'-diiodo-L-thyronine + AH2</text>
        <dbReference type="Rhea" id="RHEA:82899"/>
        <dbReference type="ChEBI" id="CHEBI:13193"/>
        <dbReference type="ChEBI" id="CHEBI:15378"/>
        <dbReference type="ChEBI" id="CHEBI:16382"/>
        <dbReference type="ChEBI" id="CHEBI:17499"/>
        <dbReference type="ChEBI" id="CHEBI:195762"/>
        <dbReference type="ChEBI" id="CHEBI:232695"/>
    </reaction>
    <physiologicalReaction direction="right-to-left" evidence="1">
        <dbReference type="Rhea" id="RHEA:82901"/>
    </physiologicalReaction>
</comment>
<comment type="catalytic activity">
    <reaction evidence="1">
        <text>3,3'-diiodothyronamine + iodide + A + H(+) = 3,3',5'-triiodothyronamine + AH2</text>
        <dbReference type="Rhea" id="RHEA:83795"/>
        <dbReference type="ChEBI" id="CHEBI:13193"/>
        <dbReference type="ChEBI" id="CHEBI:15378"/>
        <dbReference type="ChEBI" id="CHEBI:16382"/>
        <dbReference type="ChEBI" id="CHEBI:17499"/>
        <dbReference type="ChEBI" id="CHEBI:233341"/>
        <dbReference type="ChEBI" id="CHEBI:233343"/>
    </reaction>
    <physiologicalReaction direction="right-to-left" evidence="1">
        <dbReference type="Rhea" id="RHEA:83797"/>
    </physiologicalReaction>
</comment>
<comment type="catalytic activity">
    <reaction evidence="1">
        <text>3'-iodothyronamine + iodide + A + H(+) = 3',5'-diiodothyronamine + AH2</text>
        <dbReference type="Rhea" id="RHEA:83803"/>
        <dbReference type="ChEBI" id="CHEBI:13193"/>
        <dbReference type="ChEBI" id="CHEBI:15378"/>
        <dbReference type="ChEBI" id="CHEBI:16382"/>
        <dbReference type="ChEBI" id="CHEBI:17499"/>
        <dbReference type="ChEBI" id="CHEBI:233339"/>
        <dbReference type="ChEBI" id="CHEBI:233342"/>
    </reaction>
    <physiologicalReaction direction="right-to-left" evidence="1">
        <dbReference type="Rhea" id="RHEA:83805"/>
    </physiologicalReaction>
</comment>
<comment type="biophysicochemical properties">
    <kinetics>
        <KM evidence="7">3.4 nM for 3,3',5'-triiodo-L-thyronine</KM>
    </kinetics>
</comment>
<comment type="subunit">
    <text evidence="1">Predominantly monomer. Can form homodimers but homodimerization is not essential for enzyme activity. Interacts with USP20 and USP33. Interacts with MARCHF6.</text>
</comment>
<comment type="subcellular location">
    <subcellularLocation>
        <location evidence="1">Endoplasmic reticulum membrane</location>
        <topology evidence="1">Single-pass type III membrane protein</topology>
    </subcellularLocation>
</comment>
<comment type="tissue specificity">
    <text evidence="4 5 6">Expressed in cerebral cortex, cerebellum, pituitary gland, mostly in anterior pituitary gland, and pineal gland, as well as in brown adipose tissue (BAT).</text>
</comment>
<comment type="induction">
    <text evidence="4 5 6">In the pineal gland, exhibits night/day variations with a 9-fold increased expression at night. Up-regulation is due to a large degree to the release of norepinephrine from nerve terminals in the pineal gland and cAMP signaling pathway. In BAT, up-regulated in animals exposed to cold.</text>
</comment>
<comment type="PTM">
    <text evidence="1">Ubiquitinated by MARCHF6, leading to its degradation by the proteasome. Deubiquitinated by USP20 and USP33 (By similarity).</text>
</comment>
<comment type="similarity">
    <text evidence="8">Belongs to the iodothyronine deiodinase family.</text>
</comment>
<keyword id="KW-0256">Endoplasmic reticulum</keyword>
<keyword id="KW-0472">Membrane</keyword>
<keyword id="KW-0560">Oxidoreductase</keyword>
<keyword id="KW-1185">Reference proteome</keyword>
<keyword id="KW-0712">Selenocysteine</keyword>
<keyword id="KW-0893">Thyroid hormones biosynthesis</keyword>
<keyword id="KW-0812">Transmembrane</keyword>
<keyword id="KW-1133">Transmembrane helix</keyword>
<keyword id="KW-0832">Ubl conjugation</keyword>
<organism>
    <name type="scientific">Rattus norvegicus</name>
    <name type="common">Rat</name>
    <dbReference type="NCBI Taxonomy" id="10116"/>
    <lineage>
        <taxon>Eukaryota</taxon>
        <taxon>Metazoa</taxon>
        <taxon>Chordata</taxon>
        <taxon>Craniata</taxon>
        <taxon>Vertebrata</taxon>
        <taxon>Euteleostomi</taxon>
        <taxon>Mammalia</taxon>
        <taxon>Eutheria</taxon>
        <taxon>Euarchontoglires</taxon>
        <taxon>Glires</taxon>
        <taxon>Rodentia</taxon>
        <taxon>Myomorpha</taxon>
        <taxon>Muroidea</taxon>
        <taxon>Muridae</taxon>
        <taxon>Murinae</taxon>
        <taxon>Rattus</taxon>
    </lineage>
</organism>
<gene>
    <name type="primary">Dio2</name>
    <name type="synonym">Itdi2</name>
    <name type="synonym">Txdi2</name>
</gene>
<reference key="1">
    <citation type="journal article" date="1996" name="J. Clin. Invest.">
        <title>Cloning of the mammalian type II iodothyronine deiodinase. A selenoprotein differentially expressed and regulated in human and rat brain and other tissues.</title>
        <authorList>
            <person name="Croteau W."/>
            <person name="Davey J.C."/>
            <person name="Galton V.A."/>
            <person name="St Germain D.L."/>
        </authorList>
    </citation>
    <scope>NUCLEOTIDE SEQUENCE [MRNA]</scope>
    <scope>TISSUE SPECIFICITY</scope>
    <scope>INDUCTION</scope>
    <source>
        <strain>Sprague-Dawley</strain>
        <tissue>Brown adipose tissue</tissue>
    </source>
</reference>
<reference key="2">
    <citation type="journal article" date="1998" name="Thyroid">
        <title>Induction of type 2 deiodinase activity by cyclic guanosine 3',5'-monophosphate in cultured rat glial cells.</title>
        <authorList>
            <person name="Gondou A."/>
            <person name="Toyoda N."/>
            <person name="Nishikawa M."/>
            <person name="Tabata S."/>
            <person name="Yonemoto T."/>
            <person name="Ogawa Y."/>
            <person name="Tokoro T."/>
            <person name="Sakaguchi N."/>
            <person name="Wang F."/>
            <person name="Inada M."/>
        </authorList>
    </citation>
    <scope>NUCLEOTIDE SEQUENCE [MRNA]</scope>
    <scope>FUNCTION</scope>
    <scope>CATALYTIC ACTIVITY</scope>
    <scope>BIOPHYSICOCHEMICAL PROPERTIES</scope>
</reference>
<reference key="3">
    <citation type="journal article" date="1997" name="Neurosci. Lett.">
        <title>Expression and nocturnal increase of type II iodothyronine deiodinase mRNA in rat pineal gland.</title>
        <authorList>
            <person name="Murakami M."/>
            <person name="Hosoi Y."/>
            <person name="Negishi T."/>
            <person name="Kamiya Y."/>
            <person name="Ogiwara T."/>
            <person name="Mizuma H."/>
            <person name="Yamada M."/>
            <person name="Iriuchijima T."/>
            <person name="Mori M."/>
        </authorList>
    </citation>
    <scope>TISSUE SPECIFICITY</scope>
    <scope>INDUCTION</scope>
</reference>
<reference key="4">
    <citation type="journal article" date="2009" name="J. Biol. Chem.">
        <title>Night/day changes in pineal expression of &gt;600 genes: central role of adrenergic/cAMP signaling.</title>
        <authorList>
            <person name="Bailey M.J."/>
            <person name="Coon S.L."/>
            <person name="Carter D.A."/>
            <person name="Humphries A."/>
            <person name="Kim J.S."/>
            <person name="Shi Q."/>
            <person name="Gaildrat P."/>
            <person name="Morin F."/>
            <person name="Ganguly S."/>
            <person name="Hogenesch J.B."/>
            <person name="Weller J.L."/>
            <person name="Rath M.F."/>
            <person name="Moller M."/>
            <person name="Baler R."/>
            <person name="Sugden D."/>
            <person name="Rangel Z.G."/>
            <person name="Munson P.J."/>
            <person name="Klein D.C."/>
        </authorList>
    </citation>
    <scope>TISSUE SPECIFICITY</scope>
    <scope>INDUCTION</scope>
</reference>
<accession>P70551</accession>
<accession>O70179</accession>
<name>IOD2_RAT</name>
<dbReference type="EC" id="1.21.99.4" evidence="1"/>
<dbReference type="EMBL" id="U53505">
    <property type="protein sequence ID" value="AAC52767.1"/>
    <property type="molecule type" value="mRNA"/>
</dbReference>
<dbReference type="EMBL" id="AB011068">
    <property type="protein sequence ID" value="BAA25186.1"/>
    <property type="molecule type" value="mRNA"/>
</dbReference>
<dbReference type="PIR" id="T10816">
    <property type="entry name" value="T10816"/>
</dbReference>
<dbReference type="RefSeq" id="NP_113908.3">
    <property type="nucleotide sequence ID" value="NM_031720.4"/>
</dbReference>
<dbReference type="FunCoup" id="P70551">
    <property type="interactions" value="5"/>
</dbReference>
<dbReference type="STRING" id="10116.ENSRNOP00000071065"/>
<dbReference type="Ensembl" id="ENSRNOT00000099607.1">
    <property type="protein sequence ID" value="ENSRNOP00000093973.1"/>
    <property type="gene ID" value="ENSRNOG00000062383.1"/>
</dbReference>
<dbReference type="GeneID" id="65162"/>
<dbReference type="KEGG" id="rno:65162"/>
<dbReference type="UCSC" id="RGD:68418">
    <property type="organism name" value="rat"/>
</dbReference>
<dbReference type="AGR" id="RGD:68418"/>
<dbReference type="CTD" id="1734"/>
<dbReference type="RGD" id="68418">
    <property type="gene designation" value="Dio2"/>
</dbReference>
<dbReference type="GeneTree" id="ENSGT00940000154482"/>
<dbReference type="InParanoid" id="P70551"/>
<dbReference type="OMA" id="KSIWNSF"/>
<dbReference type="OrthoDB" id="428577at2759"/>
<dbReference type="PhylomeDB" id="P70551"/>
<dbReference type="BRENDA" id="1.21.99.4">
    <property type="organism ID" value="5301"/>
</dbReference>
<dbReference type="Reactome" id="R-RNO-350864">
    <property type="pathway name" value="Regulation of thyroid hormone activity"/>
</dbReference>
<dbReference type="PRO" id="PR:P70551"/>
<dbReference type="Proteomes" id="UP000002494">
    <property type="component" value="Chromosome 6"/>
</dbReference>
<dbReference type="GO" id="GO:0005789">
    <property type="term" value="C:endoplasmic reticulum membrane"/>
    <property type="evidence" value="ECO:0000250"/>
    <property type="project" value="UniProtKB"/>
</dbReference>
<dbReference type="GO" id="GO:0004800">
    <property type="term" value="F:thyroxine 5'-deiodinase activity"/>
    <property type="evidence" value="ECO:0000314"/>
    <property type="project" value="RGD"/>
</dbReference>
<dbReference type="GO" id="GO:0033798">
    <property type="term" value="F:thyroxine 5-deiodinase activity"/>
    <property type="evidence" value="ECO:0000266"/>
    <property type="project" value="RGD"/>
</dbReference>
<dbReference type="GO" id="GO:0031625">
    <property type="term" value="F:ubiquitin protein ligase binding"/>
    <property type="evidence" value="ECO:0000266"/>
    <property type="project" value="RGD"/>
</dbReference>
<dbReference type="GO" id="GO:0050873">
    <property type="term" value="P:brown fat cell differentiation"/>
    <property type="evidence" value="ECO:0000266"/>
    <property type="project" value="RGD"/>
</dbReference>
<dbReference type="GO" id="GO:0042446">
    <property type="term" value="P:hormone biosynthetic process"/>
    <property type="evidence" value="ECO:0007669"/>
    <property type="project" value="UniProtKB-KW"/>
</dbReference>
<dbReference type="GO" id="GO:0006629">
    <property type="term" value="P:lipid metabolic process"/>
    <property type="evidence" value="ECO:0000266"/>
    <property type="project" value="RGD"/>
</dbReference>
<dbReference type="GO" id="GO:0120162">
    <property type="term" value="P:positive regulation of cold-induced thermogenesis"/>
    <property type="evidence" value="ECO:0000250"/>
    <property type="project" value="YuBioLab"/>
</dbReference>
<dbReference type="GO" id="GO:0032496">
    <property type="term" value="P:response to lipopolysaccharide"/>
    <property type="evidence" value="ECO:0000270"/>
    <property type="project" value="RGD"/>
</dbReference>
<dbReference type="GO" id="GO:0042404">
    <property type="term" value="P:thyroid hormone catabolic process"/>
    <property type="evidence" value="ECO:0000266"/>
    <property type="project" value="RGD"/>
</dbReference>
<dbReference type="GO" id="GO:0006590">
    <property type="term" value="P:thyroid hormone generation"/>
    <property type="evidence" value="ECO:0000314"/>
    <property type="project" value="RGD"/>
</dbReference>
<dbReference type="GO" id="GO:0042403">
    <property type="term" value="P:thyroid hormone metabolic process"/>
    <property type="evidence" value="ECO:0000314"/>
    <property type="project" value="RGD"/>
</dbReference>
<dbReference type="FunFam" id="3.40.30.10:FF:000194">
    <property type="entry name" value="Iodothyronine deiodinase"/>
    <property type="match status" value="1"/>
</dbReference>
<dbReference type="Gene3D" id="3.40.30.10">
    <property type="entry name" value="Glutaredoxin"/>
    <property type="match status" value="1"/>
</dbReference>
<dbReference type="InterPro" id="IPR000643">
    <property type="entry name" value="Iodothyronine_deiodinase"/>
</dbReference>
<dbReference type="InterPro" id="IPR008261">
    <property type="entry name" value="Iodothyronine_deiodinase_AS"/>
</dbReference>
<dbReference type="InterPro" id="IPR036249">
    <property type="entry name" value="Thioredoxin-like_sf"/>
</dbReference>
<dbReference type="PANTHER" id="PTHR11781">
    <property type="entry name" value="IODOTHYRONINE DEIODINASE"/>
    <property type="match status" value="1"/>
</dbReference>
<dbReference type="PANTHER" id="PTHR11781:SF20">
    <property type="entry name" value="TYPE II IODOTHYRONINE DEIODINASE"/>
    <property type="match status" value="1"/>
</dbReference>
<dbReference type="Pfam" id="PF00837">
    <property type="entry name" value="T4_deiodinase"/>
    <property type="match status" value="1"/>
</dbReference>
<dbReference type="PIRSF" id="PIRSF001330">
    <property type="entry name" value="IOD"/>
    <property type="match status" value="1"/>
</dbReference>
<dbReference type="SUPFAM" id="SSF52833">
    <property type="entry name" value="Thioredoxin-like"/>
    <property type="match status" value="1"/>
</dbReference>
<dbReference type="PROSITE" id="PS01205">
    <property type="entry name" value="T4_DEIODINASE"/>
    <property type="match status" value="1"/>
</dbReference>
<proteinExistence type="evidence at protein level"/>
<protein>
    <recommendedName>
        <fullName>Type II iodothyronine deiodinase</fullName>
        <ecNumber evidence="1">1.21.99.4</ecNumber>
    </recommendedName>
    <alternativeName>
        <fullName>5DII</fullName>
    </alternativeName>
    <alternativeName>
        <fullName>DIOII</fullName>
    </alternativeName>
    <alternativeName>
        <fullName>Type 2 DI</fullName>
    </alternativeName>
    <alternativeName>
        <fullName>Type-II 5'-deiodinase</fullName>
    </alternativeName>
</protein>